<feature type="chain" id="PRO_0000328578" description="SWI/SNF complex component SNF12 homolog">
    <location>
        <begin position="1"/>
        <end position="456"/>
    </location>
</feature>
<feature type="domain" description="SWIB/MDM2" evidence="2">
    <location>
        <begin position="234"/>
        <end position="310"/>
    </location>
</feature>
<feature type="region of interest" description="Disordered" evidence="3">
    <location>
        <begin position="435"/>
        <end position="456"/>
    </location>
</feature>
<name>SNF12_DICDI</name>
<proteinExistence type="inferred from homology"/>
<comment type="function">
    <text evidence="1">Involved in transcriptional activation and repression of select genes by chromatin remodeling (alteration of DNA-nucleosome topology).</text>
</comment>
<comment type="subunit">
    <text evidence="1">Part of a SWI-SNF complex.</text>
</comment>
<comment type="subcellular location">
    <subcellularLocation>
        <location evidence="4">Nucleus</location>
    </subcellularLocation>
</comment>
<comment type="similarity">
    <text evidence="4">Belongs to the SMARCD family.</text>
</comment>
<comment type="caution">
    <text evidence="4">The gene for this protein is duplicated in strains AX3 and AX4. These strains contain a duplication of a segment of 750 kb of chromosome 2 compared to the corresponding sequence in strain AX2.</text>
</comment>
<dbReference type="EMBL" id="AAFI02000011">
    <property type="protein sequence ID" value="EAL70553.1"/>
    <property type="molecule type" value="Genomic_DNA"/>
</dbReference>
<dbReference type="EMBL" id="AAFI02000009">
    <property type="protein sequence ID" value="EAL70819.1"/>
    <property type="molecule type" value="Genomic_DNA"/>
</dbReference>
<dbReference type="RefSeq" id="XP_644479.1">
    <property type="nucleotide sequence ID" value="XM_639387.1"/>
</dbReference>
<dbReference type="RefSeq" id="XP_644771.1">
    <property type="nucleotide sequence ID" value="XM_639679.1"/>
</dbReference>
<dbReference type="SMR" id="Q556Z0"/>
<dbReference type="FunCoup" id="Q556Z0">
    <property type="interactions" value="740"/>
</dbReference>
<dbReference type="STRING" id="44689.Q556Z0"/>
<dbReference type="GlyGen" id="Q556Z0">
    <property type="glycosylation" value="1 site"/>
</dbReference>
<dbReference type="PaxDb" id="44689-DDB0233489"/>
<dbReference type="EnsemblProtists" id="EAL70553">
    <property type="protein sequence ID" value="EAL70553"/>
    <property type="gene ID" value="DDB_G0273725"/>
</dbReference>
<dbReference type="EnsemblProtists" id="EAL70819">
    <property type="protein sequence ID" value="EAL70819"/>
    <property type="gene ID" value="DDB_G0273203"/>
</dbReference>
<dbReference type="GeneID" id="8618873"/>
<dbReference type="GeneID" id="8619103"/>
<dbReference type="KEGG" id="ddi:DDB_G0273203"/>
<dbReference type="KEGG" id="ddi:DDB_G0273725"/>
<dbReference type="dictyBase" id="DDB_G0273203">
    <property type="gene designation" value="snf12-1"/>
</dbReference>
<dbReference type="dictyBase" id="DDB_G0273725">
    <property type="gene designation" value="snf12-2"/>
</dbReference>
<dbReference type="VEuPathDB" id="AmoebaDB:DDB_G0273725"/>
<dbReference type="eggNOG" id="KOG2570">
    <property type="taxonomic scope" value="Eukaryota"/>
</dbReference>
<dbReference type="HOGENOM" id="CLU_023529_2_1_1"/>
<dbReference type="InParanoid" id="Q556Z0"/>
<dbReference type="OMA" id="NFRCNEP"/>
<dbReference type="PhylomeDB" id="Q556Z0"/>
<dbReference type="Reactome" id="R-DDI-3214858">
    <property type="pathway name" value="RMTs methylate histone arginines"/>
</dbReference>
<dbReference type="PRO" id="PR:Q556Z0"/>
<dbReference type="Proteomes" id="UP000002195">
    <property type="component" value="Chromosome 2"/>
</dbReference>
<dbReference type="GO" id="GO:0005737">
    <property type="term" value="C:cytoplasm"/>
    <property type="evidence" value="ECO:0000314"/>
    <property type="project" value="dictyBase"/>
</dbReference>
<dbReference type="GO" id="GO:0005730">
    <property type="term" value="C:nucleolus"/>
    <property type="evidence" value="ECO:0000314"/>
    <property type="project" value="dictyBase"/>
</dbReference>
<dbReference type="GO" id="GO:0005654">
    <property type="term" value="C:nucleoplasm"/>
    <property type="evidence" value="ECO:0000314"/>
    <property type="project" value="dictyBase"/>
</dbReference>
<dbReference type="GO" id="GO:0005634">
    <property type="term" value="C:nucleus"/>
    <property type="evidence" value="ECO:0000318"/>
    <property type="project" value="GO_Central"/>
</dbReference>
<dbReference type="GO" id="GO:0016514">
    <property type="term" value="C:SWI/SNF complex"/>
    <property type="evidence" value="ECO:0000318"/>
    <property type="project" value="GO_Central"/>
</dbReference>
<dbReference type="GO" id="GO:0006325">
    <property type="term" value="P:chromatin organization"/>
    <property type="evidence" value="ECO:0007669"/>
    <property type="project" value="UniProtKB-KW"/>
</dbReference>
<dbReference type="GO" id="GO:0006357">
    <property type="term" value="P:regulation of transcription by RNA polymerase II"/>
    <property type="evidence" value="ECO:0000318"/>
    <property type="project" value="GO_Central"/>
</dbReference>
<dbReference type="CDD" id="cd10568">
    <property type="entry name" value="SWIB_like"/>
    <property type="match status" value="1"/>
</dbReference>
<dbReference type="Gene3D" id="1.10.245.10">
    <property type="entry name" value="SWIB/MDM2 domain"/>
    <property type="match status" value="1"/>
</dbReference>
<dbReference type="InterPro" id="IPR019835">
    <property type="entry name" value="SWIB_domain"/>
</dbReference>
<dbReference type="InterPro" id="IPR036885">
    <property type="entry name" value="SWIB_MDM2_dom_sf"/>
</dbReference>
<dbReference type="InterPro" id="IPR003121">
    <property type="entry name" value="SWIB_MDM2_domain"/>
</dbReference>
<dbReference type="PANTHER" id="PTHR13844">
    <property type="entry name" value="SWI/SNF-RELATED MATRIX-ASSOCIATED ACTIN-DEPENDENT REGULATOR OF CHROMATIN SUBFAMILY D"/>
    <property type="match status" value="1"/>
</dbReference>
<dbReference type="Pfam" id="PF02201">
    <property type="entry name" value="SWIB"/>
    <property type="match status" value="1"/>
</dbReference>
<dbReference type="SMART" id="SM00151">
    <property type="entry name" value="SWIB"/>
    <property type="match status" value="1"/>
</dbReference>
<dbReference type="SUPFAM" id="SSF47592">
    <property type="entry name" value="SWIB/MDM2 domain"/>
    <property type="match status" value="1"/>
</dbReference>
<dbReference type="PROSITE" id="PS51925">
    <property type="entry name" value="SWIB_MDM2"/>
    <property type="match status" value="1"/>
</dbReference>
<sequence length="456" mass="52001">MSKNGTTGNKKKKTKLSTAATIAANIAKANATLNNNNNSNNNSNNTNIGNSINGIPSSLPPSVTLPVEELISFAPECLLFSQLLEFEEKLDASINKRLIDIQEASRRNSIKNIRTLRLSIYNTYSNQSAYYHLDNKSLNSVQERPSWSLRVEGKLLDESQDELVNKSIKSSSSSSSTANKRKFSSFFKKVFIQIGHRDTCEWDKSQTFTETDGFEIKRNGNQEVDIKILMYLDHVPQKYKVLGGLSQLLNIHTDTKPRIILALWHYIKSNTLLDAETKKITCDENLKNIFSLEELQFNQIPQLLREHLSPPDPLEFQYTLHLSGDAKDYEQAYDIQVEVDEPIFNPNPTMRKEISQLNDEINHHIQKVYQHKRKREFMEKLSSDPLGFLNDTTANLVKDFQVSKSTTSTGFEEERHASFYYQPMTEELVKNYLSKQTTPNPTPQQISMAPSTPQTP</sequence>
<accession>Q556Z0</accession>
<accession>Q86JT1</accession>
<gene>
    <name type="primary">snf12-1</name>
    <name type="ORF">DDB_G0273203</name>
</gene>
<gene>
    <name type="primary">snf12-2</name>
    <name type="ORF">DDB_G0273725</name>
</gene>
<evidence type="ECO:0000250" key="1"/>
<evidence type="ECO:0000255" key="2">
    <source>
        <dbReference type="PROSITE-ProRule" id="PRU01273"/>
    </source>
</evidence>
<evidence type="ECO:0000256" key="3">
    <source>
        <dbReference type="SAM" id="MobiDB-lite"/>
    </source>
</evidence>
<evidence type="ECO:0000305" key="4"/>
<protein>
    <recommendedName>
        <fullName>SWI/SNF complex component SNF12 homolog</fullName>
    </recommendedName>
</protein>
<reference key="1">
    <citation type="journal article" date="2002" name="Nature">
        <title>Sequence and analysis of chromosome 2 of Dictyostelium discoideum.</title>
        <authorList>
            <person name="Gloeckner G."/>
            <person name="Eichinger L."/>
            <person name="Szafranski K."/>
            <person name="Pachebat J.A."/>
            <person name="Bankier A.T."/>
            <person name="Dear P.H."/>
            <person name="Lehmann R."/>
            <person name="Baumgart C."/>
            <person name="Parra G."/>
            <person name="Abril J.F."/>
            <person name="Guigo R."/>
            <person name="Kumpf K."/>
            <person name="Tunggal B."/>
            <person name="Cox E.C."/>
            <person name="Quail M.A."/>
            <person name="Platzer M."/>
            <person name="Rosenthal A."/>
            <person name="Noegel A.A."/>
        </authorList>
    </citation>
    <scope>NUCLEOTIDE SEQUENCE [LARGE SCALE GENOMIC DNA]</scope>
    <source>
        <strain>AX4</strain>
    </source>
</reference>
<reference key="2">
    <citation type="journal article" date="2005" name="Nature">
        <title>The genome of the social amoeba Dictyostelium discoideum.</title>
        <authorList>
            <person name="Eichinger L."/>
            <person name="Pachebat J.A."/>
            <person name="Gloeckner G."/>
            <person name="Rajandream M.A."/>
            <person name="Sucgang R."/>
            <person name="Berriman M."/>
            <person name="Song J."/>
            <person name="Olsen R."/>
            <person name="Szafranski K."/>
            <person name="Xu Q."/>
            <person name="Tunggal B."/>
            <person name="Kummerfeld S."/>
            <person name="Madera M."/>
            <person name="Konfortov B.A."/>
            <person name="Rivero F."/>
            <person name="Bankier A.T."/>
            <person name="Lehmann R."/>
            <person name="Hamlin N."/>
            <person name="Davies R."/>
            <person name="Gaudet P."/>
            <person name="Fey P."/>
            <person name="Pilcher K."/>
            <person name="Chen G."/>
            <person name="Saunders D."/>
            <person name="Sodergren E.J."/>
            <person name="Davis P."/>
            <person name="Kerhornou A."/>
            <person name="Nie X."/>
            <person name="Hall N."/>
            <person name="Anjard C."/>
            <person name="Hemphill L."/>
            <person name="Bason N."/>
            <person name="Farbrother P."/>
            <person name="Desany B."/>
            <person name="Just E."/>
            <person name="Morio T."/>
            <person name="Rost R."/>
            <person name="Churcher C.M."/>
            <person name="Cooper J."/>
            <person name="Haydock S."/>
            <person name="van Driessche N."/>
            <person name="Cronin A."/>
            <person name="Goodhead I."/>
            <person name="Muzny D.M."/>
            <person name="Mourier T."/>
            <person name="Pain A."/>
            <person name="Lu M."/>
            <person name="Harper D."/>
            <person name="Lindsay R."/>
            <person name="Hauser H."/>
            <person name="James K.D."/>
            <person name="Quiles M."/>
            <person name="Madan Babu M."/>
            <person name="Saito T."/>
            <person name="Buchrieser C."/>
            <person name="Wardroper A."/>
            <person name="Felder M."/>
            <person name="Thangavelu M."/>
            <person name="Johnson D."/>
            <person name="Knights A."/>
            <person name="Loulseged H."/>
            <person name="Mungall K.L."/>
            <person name="Oliver K."/>
            <person name="Price C."/>
            <person name="Quail M.A."/>
            <person name="Urushihara H."/>
            <person name="Hernandez J."/>
            <person name="Rabbinowitsch E."/>
            <person name="Steffen D."/>
            <person name="Sanders M."/>
            <person name="Ma J."/>
            <person name="Kohara Y."/>
            <person name="Sharp S."/>
            <person name="Simmonds M.N."/>
            <person name="Spiegler S."/>
            <person name="Tivey A."/>
            <person name="Sugano S."/>
            <person name="White B."/>
            <person name="Walker D."/>
            <person name="Woodward J.R."/>
            <person name="Winckler T."/>
            <person name="Tanaka Y."/>
            <person name="Shaulsky G."/>
            <person name="Schleicher M."/>
            <person name="Weinstock G.M."/>
            <person name="Rosenthal A."/>
            <person name="Cox E.C."/>
            <person name="Chisholm R.L."/>
            <person name="Gibbs R.A."/>
            <person name="Loomis W.F."/>
            <person name="Platzer M."/>
            <person name="Kay R.R."/>
            <person name="Williams J.G."/>
            <person name="Dear P.H."/>
            <person name="Noegel A.A."/>
            <person name="Barrell B.G."/>
            <person name="Kuspa A."/>
        </authorList>
    </citation>
    <scope>NUCLEOTIDE SEQUENCE [LARGE SCALE GENOMIC DNA]</scope>
    <source>
        <strain>AX4</strain>
    </source>
</reference>
<organism>
    <name type="scientific">Dictyostelium discoideum</name>
    <name type="common">Social amoeba</name>
    <dbReference type="NCBI Taxonomy" id="44689"/>
    <lineage>
        <taxon>Eukaryota</taxon>
        <taxon>Amoebozoa</taxon>
        <taxon>Evosea</taxon>
        <taxon>Eumycetozoa</taxon>
        <taxon>Dictyostelia</taxon>
        <taxon>Dictyosteliales</taxon>
        <taxon>Dictyosteliaceae</taxon>
        <taxon>Dictyostelium</taxon>
    </lineage>
</organism>
<keyword id="KW-0156">Chromatin regulator</keyword>
<keyword id="KW-0539">Nucleus</keyword>
<keyword id="KW-1185">Reference proteome</keyword>
<keyword id="KW-0804">Transcription</keyword>
<keyword id="KW-0805">Transcription regulation</keyword>